<sequence length="199" mass="21294">MKFSPLLDELIQSLRCLPGVGPKSAQRMAFQLLERDRKAGLKLASALSSAMSDVGHCQSCRTYTEETLCPICTSHKRGTSSTICVVETPADVLAIEAGGHFTGRYFVLLGHLSPLDGVGPEELGLALLERHLASGDVAELILATNPTVEGEATAHFIADMARRHKVMISRIAHGVPVGGELEYVDSTTLALSFNGRLPL</sequence>
<organism>
    <name type="scientific">Shewanella baltica (strain OS155 / ATCC BAA-1091)</name>
    <dbReference type="NCBI Taxonomy" id="325240"/>
    <lineage>
        <taxon>Bacteria</taxon>
        <taxon>Pseudomonadati</taxon>
        <taxon>Pseudomonadota</taxon>
        <taxon>Gammaproteobacteria</taxon>
        <taxon>Alteromonadales</taxon>
        <taxon>Shewanellaceae</taxon>
        <taxon>Shewanella</taxon>
    </lineage>
</organism>
<dbReference type="EMBL" id="CP000563">
    <property type="protein sequence ID" value="ABN62065.1"/>
    <property type="molecule type" value="Genomic_DNA"/>
</dbReference>
<dbReference type="RefSeq" id="WP_011847057.1">
    <property type="nucleotide sequence ID" value="NC_009052.1"/>
</dbReference>
<dbReference type="SMR" id="A3D5Q2"/>
<dbReference type="STRING" id="325240.Sbal_2572"/>
<dbReference type="KEGG" id="sbl:Sbal_2572"/>
<dbReference type="HOGENOM" id="CLU_060739_1_2_6"/>
<dbReference type="OrthoDB" id="9802672at2"/>
<dbReference type="Proteomes" id="UP000001557">
    <property type="component" value="Chromosome"/>
</dbReference>
<dbReference type="GO" id="GO:0003677">
    <property type="term" value="F:DNA binding"/>
    <property type="evidence" value="ECO:0007669"/>
    <property type="project" value="UniProtKB-UniRule"/>
</dbReference>
<dbReference type="GO" id="GO:0008270">
    <property type="term" value="F:zinc ion binding"/>
    <property type="evidence" value="ECO:0007669"/>
    <property type="project" value="UniProtKB-KW"/>
</dbReference>
<dbReference type="GO" id="GO:0006310">
    <property type="term" value="P:DNA recombination"/>
    <property type="evidence" value="ECO:0007669"/>
    <property type="project" value="UniProtKB-UniRule"/>
</dbReference>
<dbReference type="GO" id="GO:0006281">
    <property type="term" value="P:DNA repair"/>
    <property type="evidence" value="ECO:0007669"/>
    <property type="project" value="UniProtKB-UniRule"/>
</dbReference>
<dbReference type="CDD" id="cd01025">
    <property type="entry name" value="TOPRIM_recR"/>
    <property type="match status" value="1"/>
</dbReference>
<dbReference type="FunFam" id="1.10.8.420:FF:000001">
    <property type="entry name" value="Recombination protein RecR"/>
    <property type="match status" value="1"/>
</dbReference>
<dbReference type="FunFam" id="3.40.1360.10:FF:000001">
    <property type="entry name" value="Recombination protein RecR"/>
    <property type="match status" value="1"/>
</dbReference>
<dbReference type="Gene3D" id="3.40.1360.10">
    <property type="match status" value="1"/>
</dbReference>
<dbReference type="Gene3D" id="6.10.250.240">
    <property type="match status" value="1"/>
</dbReference>
<dbReference type="Gene3D" id="1.10.8.420">
    <property type="entry name" value="RecR Domain 1"/>
    <property type="match status" value="1"/>
</dbReference>
<dbReference type="HAMAP" id="MF_00017">
    <property type="entry name" value="RecR"/>
    <property type="match status" value="1"/>
</dbReference>
<dbReference type="InterPro" id="IPR000093">
    <property type="entry name" value="DNA_Rcmb_RecR"/>
</dbReference>
<dbReference type="InterPro" id="IPR023627">
    <property type="entry name" value="Rcmb_RecR"/>
</dbReference>
<dbReference type="InterPro" id="IPR015967">
    <property type="entry name" value="Rcmb_RecR_Znf"/>
</dbReference>
<dbReference type="InterPro" id="IPR006171">
    <property type="entry name" value="TOPRIM_dom"/>
</dbReference>
<dbReference type="InterPro" id="IPR034137">
    <property type="entry name" value="TOPRIM_RecR"/>
</dbReference>
<dbReference type="NCBIfam" id="TIGR00615">
    <property type="entry name" value="recR"/>
    <property type="match status" value="1"/>
</dbReference>
<dbReference type="PANTHER" id="PTHR30446">
    <property type="entry name" value="RECOMBINATION PROTEIN RECR"/>
    <property type="match status" value="1"/>
</dbReference>
<dbReference type="PANTHER" id="PTHR30446:SF0">
    <property type="entry name" value="RECOMBINATION PROTEIN RECR"/>
    <property type="match status" value="1"/>
</dbReference>
<dbReference type="Pfam" id="PF21175">
    <property type="entry name" value="RecR_C"/>
    <property type="match status" value="1"/>
</dbReference>
<dbReference type="Pfam" id="PF21176">
    <property type="entry name" value="RecR_HhH"/>
    <property type="match status" value="1"/>
</dbReference>
<dbReference type="Pfam" id="PF02132">
    <property type="entry name" value="RecR_ZnF"/>
    <property type="match status" value="1"/>
</dbReference>
<dbReference type="Pfam" id="PF13662">
    <property type="entry name" value="Toprim_4"/>
    <property type="match status" value="1"/>
</dbReference>
<dbReference type="SMART" id="SM00493">
    <property type="entry name" value="TOPRIM"/>
    <property type="match status" value="1"/>
</dbReference>
<dbReference type="SUPFAM" id="SSF111304">
    <property type="entry name" value="Recombination protein RecR"/>
    <property type="match status" value="1"/>
</dbReference>
<dbReference type="PROSITE" id="PS50880">
    <property type="entry name" value="TOPRIM"/>
    <property type="match status" value="1"/>
</dbReference>
<feature type="chain" id="PRO_1000001601" description="Recombination protein RecR">
    <location>
        <begin position="1"/>
        <end position="199"/>
    </location>
</feature>
<feature type="domain" description="Toprim" evidence="1">
    <location>
        <begin position="81"/>
        <end position="176"/>
    </location>
</feature>
<feature type="zinc finger region" description="C4-type" evidence="1">
    <location>
        <begin position="57"/>
        <end position="72"/>
    </location>
</feature>
<keyword id="KW-0227">DNA damage</keyword>
<keyword id="KW-0233">DNA recombination</keyword>
<keyword id="KW-0234">DNA repair</keyword>
<keyword id="KW-0479">Metal-binding</keyword>
<keyword id="KW-1185">Reference proteome</keyword>
<keyword id="KW-0862">Zinc</keyword>
<keyword id="KW-0863">Zinc-finger</keyword>
<name>RECR_SHEB5</name>
<reference key="1">
    <citation type="submission" date="2007-02" db="EMBL/GenBank/DDBJ databases">
        <title>Complete sequence of chromosome of Shewanella baltica OS155.</title>
        <authorList>
            <consortium name="US DOE Joint Genome Institute"/>
            <person name="Copeland A."/>
            <person name="Lucas S."/>
            <person name="Lapidus A."/>
            <person name="Barry K."/>
            <person name="Detter J.C."/>
            <person name="Glavina del Rio T."/>
            <person name="Hammon N."/>
            <person name="Israni S."/>
            <person name="Dalin E."/>
            <person name="Tice H."/>
            <person name="Pitluck S."/>
            <person name="Sims D.R."/>
            <person name="Brettin T."/>
            <person name="Bruce D."/>
            <person name="Han C."/>
            <person name="Tapia R."/>
            <person name="Brainard J."/>
            <person name="Schmutz J."/>
            <person name="Larimer F."/>
            <person name="Land M."/>
            <person name="Hauser L."/>
            <person name="Kyrpides N."/>
            <person name="Mikhailova N."/>
            <person name="Brettar I."/>
            <person name="Klappenbach J."/>
            <person name="Konstantinidis K."/>
            <person name="Rodrigues J."/>
            <person name="Tiedje J."/>
            <person name="Richardson P."/>
        </authorList>
    </citation>
    <scope>NUCLEOTIDE SEQUENCE [LARGE SCALE GENOMIC DNA]</scope>
    <source>
        <strain>OS155 / ATCC BAA-1091</strain>
    </source>
</reference>
<gene>
    <name evidence="1" type="primary">recR</name>
    <name type="ordered locus">Sbal_2572</name>
</gene>
<protein>
    <recommendedName>
        <fullName evidence="1">Recombination protein RecR</fullName>
    </recommendedName>
</protein>
<comment type="function">
    <text evidence="1">May play a role in DNA repair. It seems to be involved in an RecBC-independent recombinational process of DNA repair. It may act with RecF and RecO.</text>
</comment>
<comment type="similarity">
    <text evidence="1">Belongs to the RecR family.</text>
</comment>
<evidence type="ECO:0000255" key="1">
    <source>
        <dbReference type="HAMAP-Rule" id="MF_00017"/>
    </source>
</evidence>
<proteinExistence type="inferred from homology"/>
<accession>A3D5Q2</accession>